<accession>A4XAL2</accession>
<evidence type="ECO:0000255" key="1">
    <source>
        <dbReference type="HAMAP-Rule" id="MF_01970"/>
    </source>
</evidence>
<name>KYNU_SALTO</name>
<gene>
    <name evidence="1" type="primary">kynU</name>
    <name type="ordered locus">Strop_3530</name>
</gene>
<protein>
    <recommendedName>
        <fullName evidence="1">Kynureninase</fullName>
        <ecNumber evidence="1">3.7.1.3</ecNumber>
    </recommendedName>
    <alternativeName>
        <fullName evidence="1">L-kynurenine hydrolase</fullName>
    </alternativeName>
</protein>
<comment type="function">
    <text evidence="1">Catalyzes the cleavage of L-kynurenine (L-Kyn) and L-3-hydroxykynurenine (L-3OHKyn) into anthranilic acid (AA) and 3-hydroxyanthranilic acid (3-OHAA), respectively.</text>
</comment>
<comment type="catalytic activity">
    <reaction evidence="1">
        <text>L-kynurenine + H2O = anthranilate + L-alanine + H(+)</text>
        <dbReference type="Rhea" id="RHEA:16813"/>
        <dbReference type="ChEBI" id="CHEBI:15377"/>
        <dbReference type="ChEBI" id="CHEBI:15378"/>
        <dbReference type="ChEBI" id="CHEBI:16567"/>
        <dbReference type="ChEBI" id="CHEBI:57959"/>
        <dbReference type="ChEBI" id="CHEBI:57972"/>
        <dbReference type="EC" id="3.7.1.3"/>
    </reaction>
</comment>
<comment type="catalytic activity">
    <reaction evidence="1">
        <text>3-hydroxy-L-kynurenine + H2O = 3-hydroxyanthranilate + L-alanine + H(+)</text>
        <dbReference type="Rhea" id="RHEA:25143"/>
        <dbReference type="ChEBI" id="CHEBI:15377"/>
        <dbReference type="ChEBI" id="CHEBI:15378"/>
        <dbReference type="ChEBI" id="CHEBI:36559"/>
        <dbReference type="ChEBI" id="CHEBI:57972"/>
        <dbReference type="ChEBI" id="CHEBI:58125"/>
        <dbReference type="EC" id="3.7.1.3"/>
    </reaction>
</comment>
<comment type="cofactor">
    <cofactor evidence="1">
        <name>pyridoxal 5'-phosphate</name>
        <dbReference type="ChEBI" id="CHEBI:597326"/>
    </cofactor>
</comment>
<comment type="pathway">
    <text evidence="1">Amino-acid degradation; L-kynurenine degradation; L-alanine and anthranilate from L-kynurenine: step 1/1.</text>
</comment>
<comment type="pathway">
    <text evidence="1">Cofactor biosynthesis; NAD(+) biosynthesis; quinolinate from L-kynurenine: step 2/3.</text>
</comment>
<comment type="subunit">
    <text evidence="1">Homodimer.</text>
</comment>
<comment type="similarity">
    <text evidence="1">Belongs to the kynureninase family.</text>
</comment>
<organism>
    <name type="scientific">Salinispora tropica (strain ATCC BAA-916 / DSM 44818 / JCM 13857 / NBRC 105044 / CNB-440)</name>
    <dbReference type="NCBI Taxonomy" id="369723"/>
    <lineage>
        <taxon>Bacteria</taxon>
        <taxon>Bacillati</taxon>
        <taxon>Actinomycetota</taxon>
        <taxon>Actinomycetes</taxon>
        <taxon>Micromonosporales</taxon>
        <taxon>Micromonosporaceae</taxon>
        <taxon>Salinispora</taxon>
    </lineage>
</organism>
<sequence>MREEELIQEEKAANRLDTADPGHRHLFHVPPADGGRYQQAAYLAGNSLGLQPRATRDELFADLEAWRRLGVEGHLAADRPWLPYHELLTAPTARLVGARPAEVVVMNSLTVNLHLLMVSFYRPTGVRTRIVIEDSAFPSDSYAVRSQARFHGLDPDSTVVRLAPRPGEDTLRTADVRDLLAAEGDTIALVLLGGVNYLTGELMEIPEITAAGRAAGAVVGWDLAHAAGNVPLALHDWDVDFAAWCSYKYLNSGPGGLSGVFVHERHLADPTLPRFEGWWSTEAATRFEMSPVARPPATAEAWQVSNPPILAMGPVRTSLEVFDSVGMTALRERSVRLTGYLEWLLDQVTPGRPLAVVTPRDPDRRGAQLSVRIGTGSAAELAKRLRLEHGVVADAREPDVVRFAPVPLYSTYHDCWRVADALAATVEVH</sequence>
<reference key="1">
    <citation type="journal article" date="2007" name="Proc. Natl. Acad. Sci. U.S.A.">
        <title>Genome sequencing reveals complex secondary metabolome in the marine actinomycete Salinispora tropica.</title>
        <authorList>
            <person name="Udwary D.W."/>
            <person name="Zeigler L."/>
            <person name="Asolkar R.N."/>
            <person name="Singan V."/>
            <person name="Lapidus A."/>
            <person name="Fenical W."/>
            <person name="Jensen P.R."/>
            <person name="Moore B.S."/>
        </authorList>
    </citation>
    <scope>NUCLEOTIDE SEQUENCE [LARGE SCALE GENOMIC DNA]</scope>
    <source>
        <strain>ATCC BAA-916 / DSM 44818 / JCM 13857 / NBRC 105044 / CNB-440</strain>
    </source>
</reference>
<proteinExistence type="inferred from homology"/>
<keyword id="KW-0378">Hydrolase</keyword>
<keyword id="KW-0662">Pyridine nucleotide biosynthesis</keyword>
<keyword id="KW-0663">Pyridoxal phosphate</keyword>
<keyword id="KW-1185">Reference proteome</keyword>
<dbReference type="EC" id="3.7.1.3" evidence="1"/>
<dbReference type="EMBL" id="CP000667">
    <property type="protein sequence ID" value="ABP55961.1"/>
    <property type="molecule type" value="Genomic_DNA"/>
</dbReference>
<dbReference type="RefSeq" id="WP_012014736.1">
    <property type="nucleotide sequence ID" value="NC_009380.1"/>
</dbReference>
<dbReference type="SMR" id="A4XAL2"/>
<dbReference type="STRING" id="369723.Strop_3530"/>
<dbReference type="KEGG" id="stp:Strop_3530"/>
<dbReference type="PATRIC" id="fig|369723.5.peg.3644"/>
<dbReference type="eggNOG" id="COG3844">
    <property type="taxonomic scope" value="Bacteria"/>
</dbReference>
<dbReference type="HOGENOM" id="CLU_003433_4_0_11"/>
<dbReference type="UniPathway" id="UPA00253">
    <property type="reaction ID" value="UER00329"/>
</dbReference>
<dbReference type="UniPathway" id="UPA00334">
    <property type="reaction ID" value="UER00455"/>
</dbReference>
<dbReference type="Proteomes" id="UP000000235">
    <property type="component" value="Chromosome"/>
</dbReference>
<dbReference type="GO" id="GO:0005737">
    <property type="term" value="C:cytoplasm"/>
    <property type="evidence" value="ECO:0007669"/>
    <property type="project" value="InterPro"/>
</dbReference>
<dbReference type="GO" id="GO:0030429">
    <property type="term" value="F:kynureninase activity"/>
    <property type="evidence" value="ECO:0007669"/>
    <property type="project" value="UniProtKB-UniRule"/>
</dbReference>
<dbReference type="GO" id="GO:0030170">
    <property type="term" value="F:pyridoxal phosphate binding"/>
    <property type="evidence" value="ECO:0007669"/>
    <property type="project" value="UniProtKB-UniRule"/>
</dbReference>
<dbReference type="GO" id="GO:0043420">
    <property type="term" value="P:anthranilate metabolic process"/>
    <property type="evidence" value="ECO:0007669"/>
    <property type="project" value="TreeGrafter"/>
</dbReference>
<dbReference type="GO" id="GO:0097053">
    <property type="term" value="P:L-kynurenine catabolic process"/>
    <property type="evidence" value="ECO:0007669"/>
    <property type="project" value="UniProtKB-UniRule"/>
</dbReference>
<dbReference type="GO" id="GO:0019441">
    <property type="term" value="P:L-tryptophan catabolic process to kynurenine"/>
    <property type="evidence" value="ECO:0007669"/>
    <property type="project" value="TreeGrafter"/>
</dbReference>
<dbReference type="GO" id="GO:0009435">
    <property type="term" value="P:NAD biosynthetic process"/>
    <property type="evidence" value="ECO:0007669"/>
    <property type="project" value="UniProtKB-UniPathway"/>
</dbReference>
<dbReference type="GO" id="GO:0019805">
    <property type="term" value="P:quinolinate biosynthetic process"/>
    <property type="evidence" value="ECO:0007669"/>
    <property type="project" value="UniProtKB-UniRule"/>
</dbReference>
<dbReference type="FunFam" id="3.40.640.10:FF:000031">
    <property type="entry name" value="Kynureninase"/>
    <property type="match status" value="1"/>
</dbReference>
<dbReference type="Gene3D" id="3.90.1150.10">
    <property type="entry name" value="Aspartate Aminotransferase, domain 1"/>
    <property type="match status" value="1"/>
</dbReference>
<dbReference type="Gene3D" id="3.40.640.10">
    <property type="entry name" value="Type I PLP-dependent aspartate aminotransferase-like (Major domain)"/>
    <property type="match status" value="1"/>
</dbReference>
<dbReference type="HAMAP" id="MF_01970">
    <property type="entry name" value="Kynureninase"/>
    <property type="match status" value="1"/>
</dbReference>
<dbReference type="InterPro" id="IPR010111">
    <property type="entry name" value="Kynureninase"/>
</dbReference>
<dbReference type="InterPro" id="IPR015424">
    <property type="entry name" value="PyrdxlP-dep_Trfase"/>
</dbReference>
<dbReference type="InterPro" id="IPR015421">
    <property type="entry name" value="PyrdxlP-dep_Trfase_major"/>
</dbReference>
<dbReference type="InterPro" id="IPR015422">
    <property type="entry name" value="PyrdxlP-dep_Trfase_small"/>
</dbReference>
<dbReference type="NCBIfam" id="TIGR01814">
    <property type="entry name" value="kynureninase"/>
    <property type="match status" value="1"/>
</dbReference>
<dbReference type="PANTHER" id="PTHR14084">
    <property type="entry name" value="KYNURENINASE"/>
    <property type="match status" value="1"/>
</dbReference>
<dbReference type="PANTHER" id="PTHR14084:SF0">
    <property type="entry name" value="KYNURENINASE"/>
    <property type="match status" value="1"/>
</dbReference>
<dbReference type="Pfam" id="PF22580">
    <property type="entry name" value="KYNU_C"/>
    <property type="match status" value="1"/>
</dbReference>
<dbReference type="PIRSF" id="PIRSF038800">
    <property type="entry name" value="KYNU"/>
    <property type="match status" value="1"/>
</dbReference>
<dbReference type="SUPFAM" id="SSF53383">
    <property type="entry name" value="PLP-dependent transferases"/>
    <property type="match status" value="1"/>
</dbReference>
<feature type="chain" id="PRO_0000357011" description="Kynureninase">
    <location>
        <begin position="1"/>
        <end position="429"/>
    </location>
</feature>
<feature type="binding site" evidence="1">
    <location>
        <position position="109"/>
    </location>
    <ligand>
        <name>pyridoxal 5'-phosphate</name>
        <dbReference type="ChEBI" id="CHEBI:597326"/>
    </ligand>
</feature>
<feature type="binding site" evidence="1">
    <location>
        <position position="110"/>
    </location>
    <ligand>
        <name>pyridoxal 5'-phosphate</name>
        <dbReference type="ChEBI" id="CHEBI:597326"/>
    </ligand>
</feature>
<feature type="binding site" evidence="1">
    <location>
        <begin position="137"/>
        <end position="140"/>
    </location>
    <ligand>
        <name>pyridoxal 5'-phosphate</name>
        <dbReference type="ChEBI" id="CHEBI:597326"/>
    </ligand>
</feature>
<feature type="binding site" evidence="1">
    <location>
        <position position="222"/>
    </location>
    <ligand>
        <name>pyridoxal 5'-phosphate</name>
        <dbReference type="ChEBI" id="CHEBI:597326"/>
    </ligand>
</feature>
<feature type="binding site" evidence="1">
    <location>
        <position position="225"/>
    </location>
    <ligand>
        <name>pyridoxal 5'-phosphate</name>
        <dbReference type="ChEBI" id="CHEBI:597326"/>
    </ligand>
</feature>
<feature type="binding site" evidence="1">
    <location>
        <position position="247"/>
    </location>
    <ligand>
        <name>pyridoxal 5'-phosphate</name>
        <dbReference type="ChEBI" id="CHEBI:597326"/>
    </ligand>
</feature>
<feature type="binding site" evidence="1">
    <location>
        <position position="278"/>
    </location>
    <ligand>
        <name>pyridoxal 5'-phosphate</name>
        <dbReference type="ChEBI" id="CHEBI:597326"/>
    </ligand>
</feature>
<feature type="binding site" evidence="1">
    <location>
        <position position="306"/>
    </location>
    <ligand>
        <name>pyridoxal 5'-phosphate</name>
        <dbReference type="ChEBI" id="CHEBI:597326"/>
    </ligand>
</feature>
<feature type="modified residue" description="N6-(pyridoxal phosphate)lysine" evidence="1">
    <location>
        <position position="248"/>
    </location>
</feature>